<evidence type="ECO:0000255" key="1">
    <source>
        <dbReference type="HAMAP-Rule" id="MF_00105"/>
    </source>
</evidence>
<feature type="chain" id="PRO_0000176969" description="Transcription elongation factor GreA">
    <location>
        <begin position="1"/>
        <end position="158"/>
    </location>
</feature>
<protein>
    <recommendedName>
        <fullName evidence="1">Transcription elongation factor GreA</fullName>
    </recommendedName>
    <alternativeName>
        <fullName evidence="1">Transcript cleavage factor GreA</fullName>
    </alternativeName>
</protein>
<gene>
    <name evidence="1" type="primary">greA</name>
    <name type="ordered locus">SF3221</name>
    <name type="ordered locus">S3439</name>
</gene>
<accession>P0A6W8</accession>
<accession>P21346</accession>
<accession>P78111</accession>
<accession>Q8X9K9</accession>
<proteinExistence type="inferred from homology"/>
<comment type="function">
    <text evidence="1">Necessary for efficient RNA polymerase transcription elongation past template-encoded arresting sites. The arresting sites in DNA have the property of trapping a certain fraction of elongating RNA polymerases that pass through, resulting in locked ternary complexes. Cleavage of the nascent transcript by cleavage factors such as GreA or GreB allows the resumption of elongation from the new 3'terminus. GreA releases sequences of 2 to 3 nucleotides.</text>
</comment>
<comment type="similarity">
    <text evidence="1">Belongs to the GreA/GreB family.</text>
</comment>
<sequence>MQAIPMTLRGAEKLREELDFLKSVRRPEIIAAIAEAREHGDLKENAEYHAAREQQGFCEGRIKDIEAKLSNAQVIDVTKMPNNGRVIFGATVTVLNLDSDEEQTYRIVGDDEADFKQNLISVNSPIARGLIGKEEDDVVVIKTPGGEVEFEVIKVEYL</sequence>
<organism>
    <name type="scientific">Shigella flexneri</name>
    <dbReference type="NCBI Taxonomy" id="623"/>
    <lineage>
        <taxon>Bacteria</taxon>
        <taxon>Pseudomonadati</taxon>
        <taxon>Pseudomonadota</taxon>
        <taxon>Gammaproteobacteria</taxon>
        <taxon>Enterobacterales</taxon>
        <taxon>Enterobacteriaceae</taxon>
        <taxon>Shigella</taxon>
    </lineage>
</organism>
<keyword id="KW-0238">DNA-binding</keyword>
<keyword id="KW-1185">Reference proteome</keyword>
<keyword id="KW-0804">Transcription</keyword>
<keyword id="KW-0805">Transcription regulation</keyword>
<reference key="1">
    <citation type="journal article" date="2002" name="Nucleic Acids Res.">
        <title>Genome sequence of Shigella flexneri 2a: insights into pathogenicity through comparison with genomes of Escherichia coli K12 and O157.</title>
        <authorList>
            <person name="Jin Q."/>
            <person name="Yuan Z."/>
            <person name="Xu J."/>
            <person name="Wang Y."/>
            <person name="Shen Y."/>
            <person name="Lu W."/>
            <person name="Wang J."/>
            <person name="Liu H."/>
            <person name="Yang J."/>
            <person name="Yang F."/>
            <person name="Zhang X."/>
            <person name="Zhang J."/>
            <person name="Yang G."/>
            <person name="Wu H."/>
            <person name="Qu D."/>
            <person name="Dong J."/>
            <person name="Sun L."/>
            <person name="Xue Y."/>
            <person name="Zhao A."/>
            <person name="Gao Y."/>
            <person name="Zhu J."/>
            <person name="Kan B."/>
            <person name="Ding K."/>
            <person name="Chen S."/>
            <person name="Cheng H."/>
            <person name="Yao Z."/>
            <person name="He B."/>
            <person name="Chen R."/>
            <person name="Ma D."/>
            <person name="Qiang B."/>
            <person name="Wen Y."/>
            <person name="Hou Y."/>
            <person name="Yu J."/>
        </authorList>
    </citation>
    <scope>NUCLEOTIDE SEQUENCE [LARGE SCALE GENOMIC DNA]</scope>
    <source>
        <strain>301 / Serotype 2a</strain>
    </source>
</reference>
<reference key="2">
    <citation type="journal article" date="2003" name="Infect. Immun.">
        <title>Complete genome sequence and comparative genomics of Shigella flexneri serotype 2a strain 2457T.</title>
        <authorList>
            <person name="Wei J."/>
            <person name="Goldberg M.B."/>
            <person name="Burland V."/>
            <person name="Venkatesan M.M."/>
            <person name="Deng W."/>
            <person name="Fournier G."/>
            <person name="Mayhew G.F."/>
            <person name="Plunkett G. III"/>
            <person name="Rose D.J."/>
            <person name="Darling A."/>
            <person name="Mau B."/>
            <person name="Perna N.T."/>
            <person name="Payne S.M."/>
            <person name="Runyen-Janecky L.J."/>
            <person name="Zhou S."/>
            <person name="Schwartz D.C."/>
            <person name="Blattner F.R."/>
        </authorList>
    </citation>
    <scope>NUCLEOTIDE SEQUENCE [LARGE SCALE GENOMIC DNA]</scope>
    <source>
        <strain>ATCC 700930 / 2457T / Serotype 2a</strain>
    </source>
</reference>
<name>GREA_SHIFL</name>
<dbReference type="EMBL" id="AE005674">
    <property type="protein sequence ID" value="AAN44687.1"/>
    <property type="molecule type" value="Genomic_DNA"/>
</dbReference>
<dbReference type="EMBL" id="AE014073">
    <property type="protein sequence ID" value="AAP18501.1"/>
    <property type="molecule type" value="Genomic_DNA"/>
</dbReference>
<dbReference type="RefSeq" id="NP_708980.1">
    <property type="nucleotide sequence ID" value="NC_004337.2"/>
</dbReference>
<dbReference type="RefSeq" id="WP_001148001.1">
    <property type="nucleotide sequence ID" value="NZ_WPGW01000004.1"/>
</dbReference>
<dbReference type="SMR" id="P0A6W8"/>
<dbReference type="STRING" id="198214.SF3221"/>
<dbReference type="PaxDb" id="198214-SF3221"/>
<dbReference type="GeneID" id="1027148"/>
<dbReference type="GeneID" id="93778800"/>
<dbReference type="KEGG" id="sfl:SF3221"/>
<dbReference type="KEGG" id="sfx:S3439"/>
<dbReference type="PATRIC" id="fig|198214.7.peg.3821"/>
<dbReference type="HOGENOM" id="CLU_101379_2_0_6"/>
<dbReference type="Proteomes" id="UP000001006">
    <property type="component" value="Chromosome"/>
</dbReference>
<dbReference type="Proteomes" id="UP000002673">
    <property type="component" value="Chromosome"/>
</dbReference>
<dbReference type="GO" id="GO:0003677">
    <property type="term" value="F:DNA binding"/>
    <property type="evidence" value="ECO:0007669"/>
    <property type="project" value="UniProtKB-UniRule"/>
</dbReference>
<dbReference type="GO" id="GO:0070063">
    <property type="term" value="F:RNA polymerase binding"/>
    <property type="evidence" value="ECO:0007669"/>
    <property type="project" value="InterPro"/>
</dbReference>
<dbReference type="GO" id="GO:0006354">
    <property type="term" value="P:DNA-templated transcription elongation"/>
    <property type="evidence" value="ECO:0007669"/>
    <property type="project" value="TreeGrafter"/>
</dbReference>
<dbReference type="GO" id="GO:0032784">
    <property type="term" value="P:regulation of DNA-templated transcription elongation"/>
    <property type="evidence" value="ECO:0007669"/>
    <property type="project" value="UniProtKB-UniRule"/>
</dbReference>
<dbReference type="FunFam" id="1.10.287.180:FF:000001">
    <property type="entry name" value="Transcription elongation factor GreA"/>
    <property type="match status" value="1"/>
</dbReference>
<dbReference type="FunFam" id="3.10.50.30:FF:000001">
    <property type="entry name" value="Transcription elongation factor GreA"/>
    <property type="match status" value="1"/>
</dbReference>
<dbReference type="Gene3D" id="3.10.50.30">
    <property type="entry name" value="Transcription elongation factor, GreA/GreB, C-terminal domain"/>
    <property type="match status" value="1"/>
</dbReference>
<dbReference type="Gene3D" id="1.10.287.180">
    <property type="entry name" value="Transcription elongation factor, GreA/GreB, N-terminal domain"/>
    <property type="match status" value="1"/>
</dbReference>
<dbReference type="HAMAP" id="MF_00105">
    <property type="entry name" value="GreA_GreB"/>
    <property type="match status" value="1"/>
</dbReference>
<dbReference type="InterPro" id="IPR036953">
    <property type="entry name" value="GreA/GreB_C_sf"/>
</dbReference>
<dbReference type="InterPro" id="IPR018151">
    <property type="entry name" value="TF_GreA/GreB_CS"/>
</dbReference>
<dbReference type="InterPro" id="IPR006359">
    <property type="entry name" value="Tscrpt_elong_fac_GreA"/>
</dbReference>
<dbReference type="InterPro" id="IPR028624">
    <property type="entry name" value="Tscrpt_elong_fac_GreA/B"/>
</dbReference>
<dbReference type="InterPro" id="IPR001437">
    <property type="entry name" value="Tscrpt_elong_fac_GreA/B_C"/>
</dbReference>
<dbReference type="InterPro" id="IPR023459">
    <property type="entry name" value="Tscrpt_elong_fac_GreA/B_fam"/>
</dbReference>
<dbReference type="InterPro" id="IPR022691">
    <property type="entry name" value="Tscrpt_elong_fac_GreA/B_N"/>
</dbReference>
<dbReference type="InterPro" id="IPR036805">
    <property type="entry name" value="Tscrpt_elong_fac_GreA/B_N_sf"/>
</dbReference>
<dbReference type="NCBIfam" id="TIGR01462">
    <property type="entry name" value="greA"/>
    <property type="match status" value="1"/>
</dbReference>
<dbReference type="NCBIfam" id="NF001261">
    <property type="entry name" value="PRK00226.1-2"/>
    <property type="match status" value="1"/>
</dbReference>
<dbReference type="NCBIfam" id="NF001263">
    <property type="entry name" value="PRK00226.1-4"/>
    <property type="match status" value="1"/>
</dbReference>
<dbReference type="NCBIfam" id="NF001264">
    <property type="entry name" value="PRK00226.1-5"/>
    <property type="match status" value="1"/>
</dbReference>
<dbReference type="PANTHER" id="PTHR30437">
    <property type="entry name" value="TRANSCRIPTION ELONGATION FACTOR GREA"/>
    <property type="match status" value="1"/>
</dbReference>
<dbReference type="PANTHER" id="PTHR30437:SF4">
    <property type="entry name" value="TRANSCRIPTION ELONGATION FACTOR GREA"/>
    <property type="match status" value="1"/>
</dbReference>
<dbReference type="Pfam" id="PF01272">
    <property type="entry name" value="GreA_GreB"/>
    <property type="match status" value="1"/>
</dbReference>
<dbReference type="Pfam" id="PF03449">
    <property type="entry name" value="GreA_GreB_N"/>
    <property type="match status" value="1"/>
</dbReference>
<dbReference type="PIRSF" id="PIRSF006092">
    <property type="entry name" value="GreA_GreB"/>
    <property type="match status" value="1"/>
</dbReference>
<dbReference type="SUPFAM" id="SSF54534">
    <property type="entry name" value="FKBP-like"/>
    <property type="match status" value="1"/>
</dbReference>
<dbReference type="SUPFAM" id="SSF46557">
    <property type="entry name" value="GreA transcript cleavage protein, N-terminal domain"/>
    <property type="match status" value="1"/>
</dbReference>
<dbReference type="PROSITE" id="PS00829">
    <property type="entry name" value="GREAB_1"/>
    <property type="match status" value="1"/>
</dbReference>
<dbReference type="PROSITE" id="PS00830">
    <property type="entry name" value="GREAB_2"/>
    <property type="match status" value="1"/>
</dbReference>